<gene>
    <name evidence="1" type="primary">frr</name>
    <name type="ordered locus">MGAS10270_Spy0381</name>
</gene>
<feature type="chain" id="PRO_1000003285" description="Ribosome-recycling factor">
    <location>
        <begin position="1"/>
        <end position="185"/>
    </location>
</feature>
<dbReference type="EMBL" id="CP000260">
    <property type="protein sequence ID" value="ABF33446.1"/>
    <property type="molecule type" value="Genomic_DNA"/>
</dbReference>
<dbReference type="SMR" id="Q1JI77"/>
<dbReference type="KEGG" id="sph:MGAS10270_Spy0381"/>
<dbReference type="HOGENOM" id="CLU_073981_2_0_9"/>
<dbReference type="Proteomes" id="UP000002436">
    <property type="component" value="Chromosome"/>
</dbReference>
<dbReference type="GO" id="GO:0005737">
    <property type="term" value="C:cytoplasm"/>
    <property type="evidence" value="ECO:0007669"/>
    <property type="project" value="UniProtKB-SubCell"/>
</dbReference>
<dbReference type="GO" id="GO:0043023">
    <property type="term" value="F:ribosomal large subunit binding"/>
    <property type="evidence" value="ECO:0007669"/>
    <property type="project" value="TreeGrafter"/>
</dbReference>
<dbReference type="GO" id="GO:0006415">
    <property type="term" value="P:translational termination"/>
    <property type="evidence" value="ECO:0007669"/>
    <property type="project" value="UniProtKB-UniRule"/>
</dbReference>
<dbReference type="CDD" id="cd00520">
    <property type="entry name" value="RRF"/>
    <property type="match status" value="1"/>
</dbReference>
<dbReference type="FunFam" id="1.10.132.20:FF:000001">
    <property type="entry name" value="Ribosome-recycling factor"/>
    <property type="match status" value="1"/>
</dbReference>
<dbReference type="FunFam" id="3.30.1360.40:FF:000001">
    <property type="entry name" value="Ribosome-recycling factor"/>
    <property type="match status" value="1"/>
</dbReference>
<dbReference type="Gene3D" id="3.30.1360.40">
    <property type="match status" value="1"/>
</dbReference>
<dbReference type="Gene3D" id="1.10.132.20">
    <property type="entry name" value="Ribosome-recycling factor"/>
    <property type="match status" value="1"/>
</dbReference>
<dbReference type="HAMAP" id="MF_00040">
    <property type="entry name" value="RRF"/>
    <property type="match status" value="1"/>
</dbReference>
<dbReference type="InterPro" id="IPR002661">
    <property type="entry name" value="Ribosome_recyc_fac"/>
</dbReference>
<dbReference type="InterPro" id="IPR023584">
    <property type="entry name" value="Ribosome_recyc_fac_dom"/>
</dbReference>
<dbReference type="InterPro" id="IPR036191">
    <property type="entry name" value="RRF_sf"/>
</dbReference>
<dbReference type="NCBIfam" id="TIGR00496">
    <property type="entry name" value="frr"/>
    <property type="match status" value="1"/>
</dbReference>
<dbReference type="PANTHER" id="PTHR20982:SF3">
    <property type="entry name" value="MITOCHONDRIAL RIBOSOME RECYCLING FACTOR PSEUDO 1"/>
    <property type="match status" value="1"/>
</dbReference>
<dbReference type="PANTHER" id="PTHR20982">
    <property type="entry name" value="RIBOSOME RECYCLING FACTOR"/>
    <property type="match status" value="1"/>
</dbReference>
<dbReference type="Pfam" id="PF01765">
    <property type="entry name" value="RRF"/>
    <property type="match status" value="1"/>
</dbReference>
<dbReference type="SUPFAM" id="SSF55194">
    <property type="entry name" value="Ribosome recycling factor, RRF"/>
    <property type="match status" value="1"/>
</dbReference>
<proteinExistence type="inferred from homology"/>
<organism>
    <name type="scientific">Streptococcus pyogenes serotype M2 (strain MGAS10270)</name>
    <dbReference type="NCBI Taxonomy" id="370552"/>
    <lineage>
        <taxon>Bacteria</taxon>
        <taxon>Bacillati</taxon>
        <taxon>Bacillota</taxon>
        <taxon>Bacilli</taxon>
        <taxon>Lactobacillales</taxon>
        <taxon>Streptococcaceae</taxon>
        <taxon>Streptococcus</taxon>
    </lineage>
</organism>
<accession>Q1JI77</accession>
<keyword id="KW-0963">Cytoplasm</keyword>
<keyword id="KW-0648">Protein biosynthesis</keyword>
<name>RRF_STRPD</name>
<reference key="1">
    <citation type="journal article" date="2006" name="Proc. Natl. Acad. Sci. U.S.A.">
        <title>Molecular genetic anatomy of inter- and intraserotype variation in the human bacterial pathogen group A Streptococcus.</title>
        <authorList>
            <person name="Beres S.B."/>
            <person name="Richter E.W."/>
            <person name="Nagiec M.J."/>
            <person name="Sumby P."/>
            <person name="Porcella S.F."/>
            <person name="DeLeo F.R."/>
            <person name="Musser J.M."/>
        </authorList>
    </citation>
    <scope>NUCLEOTIDE SEQUENCE [LARGE SCALE GENOMIC DNA]</scope>
    <source>
        <strain>MGAS10270</strain>
    </source>
</reference>
<evidence type="ECO:0000255" key="1">
    <source>
        <dbReference type="HAMAP-Rule" id="MF_00040"/>
    </source>
</evidence>
<protein>
    <recommendedName>
        <fullName evidence="1">Ribosome-recycling factor</fullName>
        <shortName evidence="1">RRF</shortName>
    </recommendedName>
    <alternativeName>
        <fullName evidence="1">Ribosome-releasing factor</fullName>
    </alternativeName>
</protein>
<sequence>MANAIIETAKERFAQSHQSLSREYASIRAGRANASLLDRIQVDYYGAPTPLNQLASITVPEARVLLISPFDKSSIKDIERALNASDLGITPANDGSVIRLVIPALTEETRKELAKEVKKVGENAKIAIRNIRRDAMDDAKKQEKAKEITEDELKTLEKDIQKATDDAIKEIDRMTAEKEKELLSV</sequence>
<comment type="function">
    <text evidence="1">Responsible for the release of ribosomes from messenger RNA at the termination of protein biosynthesis. May increase the efficiency of translation by recycling ribosomes from one round of translation to another.</text>
</comment>
<comment type="subcellular location">
    <subcellularLocation>
        <location evidence="1">Cytoplasm</location>
    </subcellularLocation>
</comment>
<comment type="similarity">
    <text evidence="1">Belongs to the RRF family.</text>
</comment>